<proteinExistence type="inferred from homology"/>
<gene>
    <name evidence="4" type="primary">Or10h28</name>
    <name evidence="4" type="synonym">Mor267-1</name>
    <name evidence="4" type="synonym">Olfr63</name>
</gene>
<keyword id="KW-1003">Cell membrane</keyword>
<keyword id="KW-1015">Disulfide bond</keyword>
<keyword id="KW-0297">G-protein coupled receptor</keyword>
<keyword id="KW-0325">Glycoprotein</keyword>
<keyword id="KW-0472">Membrane</keyword>
<keyword id="KW-0552">Olfaction</keyword>
<keyword id="KW-0675">Receptor</keyword>
<keyword id="KW-1185">Reference proteome</keyword>
<keyword id="KW-0716">Sensory transduction</keyword>
<keyword id="KW-0807">Transducer</keyword>
<keyword id="KW-0812">Transmembrane</keyword>
<keyword id="KW-1133">Transmembrane helix</keyword>
<feature type="chain" id="PRO_0000150815" description="Olfactory receptor 10H28">
    <location>
        <begin position="1"/>
        <end position="316"/>
    </location>
</feature>
<feature type="topological domain" description="Extracellular" evidence="1">
    <location>
        <begin position="1"/>
        <end position="26"/>
    </location>
</feature>
<feature type="transmembrane region" description="Helical; Name=1" evidence="1">
    <location>
        <begin position="27"/>
        <end position="47"/>
    </location>
</feature>
<feature type="topological domain" description="Cytoplasmic" evidence="1">
    <location>
        <begin position="48"/>
        <end position="57"/>
    </location>
</feature>
<feature type="transmembrane region" description="Helical; Name=2" evidence="1">
    <location>
        <begin position="58"/>
        <end position="78"/>
    </location>
</feature>
<feature type="topological domain" description="Extracellular" evidence="1">
    <location>
        <begin position="79"/>
        <end position="100"/>
    </location>
</feature>
<feature type="transmembrane region" description="Helical; Name=3" evidence="1">
    <location>
        <begin position="101"/>
        <end position="121"/>
    </location>
</feature>
<feature type="topological domain" description="Cytoplasmic" evidence="1">
    <location>
        <begin position="122"/>
        <end position="144"/>
    </location>
</feature>
<feature type="transmembrane region" description="Helical; Name=4" evidence="1">
    <location>
        <begin position="145"/>
        <end position="165"/>
    </location>
</feature>
<feature type="topological domain" description="Extracellular" evidence="1">
    <location>
        <begin position="166"/>
        <end position="207"/>
    </location>
</feature>
<feature type="transmembrane region" description="Helical; Name=5" evidence="1">
    <location>
        <begin position="208"/>
        <end position="228"/>
    </location>
</feature>
<feature type="topological domain" description="Cytoplasmic" evidence="1">
    <location>
        <begin position="229"/>
        <end position="241"/>
    </location>
</feature>
<feature type="transmembrane region" description="Helical; Name=6" evidence="1">
    <location>
        <begin position="242"/>
        <end position="262"/>
    </location>
</feature>
<feature type="topological domain" description="Extracellular" evidence="1">
    <location>
        <begin position="263"/>
        <end position="273"/>
    </location>
</feature>
<feature type="transmembrane region" description="Helical; Name=7" evidence="1">
    <location>
        <begin position="274"/>
        <end position="294"/>
    </location>
</feature>
<feature type="topological domain" description="Cytoplasmic" evidence="1">
    <location>
        <begin position="295"/>
        <end position="316"/>
    </location>
</feature>
<feature type="glycosylation site" description="N-linked (GlcNAc...) asparagine" evidence="1">
    <location>
        <position position="5"/>
    </location>
</feature>
<feature type="disulfide bond" evidence="2">
    <location>
        <begin position="98"/>
        <end position="190"/>
    </location>
</feature>
<comment type="function">
    <text evidence="3">Odorant receptor.</text>
</comment>
<comment type="subcellular location">
    <subcellularLocation>
        <location evidence="3">Cell membrane</location>
        <topology evidence="1">Multi-pass membrane protein</topology>
    </subcellularLocation>
</comment>
<comment type="similarity">
    <text evidence="2">Belongs to the G-protein coupled receptor 1 family.</text>
</comment>
<evidence type="ECO:0000255" key="1"/>
<evidence type="ECO:0000255" key="2">
    <source>
        <dbReference type="PROSITE-ProRule" id="PRU00521"/>
    </source>
</evidence>
<evidence type="ECO:0000305" key="3"/>
<evidence type="ECO:0000312" key="4">
    <source>
        <dbReference type="MGI" id="MGI:1335096"/>
    </source>
</evidence>
<reference key="1">
    <citation type="submission" date="2000-06" db="EMBL/GenBank/DDBJ databases">
        <authorList>
            <person name="Feinstein P."/>
            <person name="Mombaerts P."/>
        </authorList>
    </citation>
    <scope>NUCLEOTIDE SEQUENCE [GENOMIC DNA]</scope>
    <source>
        <strain>C57BL/6J</strain>
    </source>
</reference>
<reference key="2">
    <citation type="journal article" date="2002" name="Nat. Neurosci.">
        <title>The olfactory receptor gene superfamily of the mouse.</title>
        <authorList>
            <person name="Zhang X."/>
            <person name="Firestein S."/>
        </authorList>
    </citation>
    <scope>NUCLEOTIDE SEQUENCE [GENOMIC DNA]</scope>
</reference>
<reference key="3">
    <citation type="journal article" date="2002" name="Hum. Mol. Genet.">
        <title>Different evolutionary processes shaped the mouse and human olfactory receptor gene families.</title>
        <authorList>
            <person name="Young J.M."/>
            <person name="Friedman C."/>
            <person name="Williams E.M."/>
            <person name="Ross J.A."/>
            <person name="Tonnes-Priddy L."/>
            <person name="Trask B.J."/>
        </authorList>
    </citation>
    <scope>NUCLEOTIDE SEQUENCE [GENOMIC DNA]</scope>
</reference>
<reference key="4">
    <citation type="journal article" date="2002" name="Hum. Mol. Genet.">
        <authorList>
            <person name="Young J.M."/>
            <person name="Friedman C."/>
            <person name="Williams E.M."/>
            <person name="Ross J.A."/>
            <person name="Tonnes-Priddy L."/>
            <person name="Trask B.J."/>
        </authorList>
    </citation>
    <scope>ERRATUM OF PUBMED:11875048</scope>
</reference>
<dbReference type="EMBL" id="AF281257">
    <property type="protein sequence ID" value="AAL36984.1"/>
    <property type="molecule type" value="Genomic_DNA"/>
</dbReference>
<dbReference type="EMBL" id="AY073151">
    <property type="protein sequence ID" value="AAL60814.1"/>
    <property type="molecule type" value="Genomic_DNA"/>
</dbReference>
<dbReference type="EMBL" id="AY317466">
    <property type="protein sequence ID" value="AAP70900.1"/>
    <property type="molecule type" value="Genomic_DNA"/>
</dbReference>
<dbReference type="CCDS" id="CCDS37563.1"/>
<dbReference type="RefSeq" id="NP_667148.1">
    <property type="nucleotide sequence ID" value="NM_146937.2"/>
</dbReference>
<dbReference type="SMR" id="Q8VBW9"/>
<dbReference type="FunCoup" id="Q8VBW9">
    <property type="interactions" value="1313"/>
</dbReference>
<dbReference type="STRING" id="10090.ENSMUSP00000150323"/>
<dbReference type="GlyCosmos" id="Q8VBW9">
    <property type="glycosylation" value="1 site, No reported glycans"/>
</dbReference>
<dbReference type="GlyGen" id="Q8VBW9">
    <property type="glycosylation" value="1 site"/>
</dbReference>
<dbReference type="iPTMnet" id="Q8VBW9"/>
<dbReference type="PhosphoSitePlus" id="Q8VBW9"/>
<dbReference type="PaxDb" id="10090-ENSMUSP00000067207"/>
<dbReference type="DNASU" id="258939"/>
<dbReference type="Ensembl" id="ENSMUST00000067840.7">
    <property type="protein sequence ID" value="ENSMUSP00000067207.5"/>
    <property type="gene ID" value="ENSMUSG00000054666.8"/>
</dbReference>
<dbReference type="Ensembl" id="ENSMUST00000217023.3">
    <property type="protein sequence ID" value="ENSMUSP00000150323.2"/>
    <property type="gene ID" value="ENSMUSG00000054666.8"/>
</dbReference>
<dbReference type="GeneID" id="258939"/>
<dbReference type="KEGG" id="mmu:258939"/>
<dbReference type="UCSC" id="uc008byg.1">
    <property type="organism name" value="mouse"/>
</dbReference>
<dbReference type="AGR" id="MGI:1335096"/>
<dbReference type="CTD" id="258939"/>
<dbReference type="MGI" id="MGI:1335096">
    <property type="gene designation" value="Or10h28"/>
</dbReference>
<dbReference type="VEuPathDB" id="HostDB:ENSMUSG00000054666"/>
<dbReference type="eggNOG" id="ENOG502SJHK">
    <property type="taxonomic scope" value="Eukaryota"/>
</dbReference>
<dbReference type="GeneTree" id="ENSGT01090000260045"/>
<dbReference type="HOGENOM" id="CLU_012526_1_2_1"/>
<dbReference type="InParanoid" id="Q8VBW9"/>
<dbReference type="OMA" id="SCAGQMF"/>
<dbReference type="OrthoDB" id="9975554at2759"/>
<dbReference type="PhylomeDB" id="Q8VBW9"/>
<dbReference type="TreeFam" id="TF338279"/>
<dbReference type="BioGRID-ORCS" id="258939">
    <property type="hits" value="3 hits in 71 CRISPR screens"/>
</dbReference>
<dbReference type="PRO" id="PR:Q8VBW9"/>
<dbReference type="Proteomes" id="UP000000589">
    <property type="component" value="Chromosome 17"/>
</dbReference>
<dbReference type="RNAct" id="Q8VBW9">
    <property type="molecule type" value="protein"/>
</dbReference>
<dbReference type="ExpressionAtlas" id="Q8VBW9">
    <property type="expression patterns" value="baseline and differential"/>
</dbReference>
<dbReference type="GO" id="GO:0016020">
    <property type="term" value="C:membrane"/>
    <property type="evidence" value="ECO:0000266"/>
    <property type="project" value="MGI"/>
</dbReference>
<dbReference type="GO" id="GO:0005886">
    <property type="term" value="C:plasma membrane"/>
    <property type="evidence" value="ECO:0007669"/>
    <property type="project" value="UniProtKB-SubCell"/>
</dbReference>
<dbReference type="GO" id="GO:0004930">
    <property type="term" value="F:G protein-coupled receptor activity"/>
    <property type="evidence" value="ECO:0007669"/>
    <property type="project" value="UniProtKB-KW"/>
</dbReference>
<dbReference type="GO" id="GO:0004984">
    <property type="term" value="F:olfactory receptor activity"/>
    <property type="evidence" value="ECO:0000266"/>
    <property type="project" value="MGI"/>
</dbReference>
<dbReference type="GO" id="GO:0007186">
    <property type="term" value="P:G protein-coupled receptor signaling pathway"/>
    <property type="evidence" value="ECO:0000266"/>
    <property type="project" value="MGI"/>
</dbReference>
<dbReference type="GO" id="GO:0007608">
    <property type="term" value="P:sensory perception of smell"/>
    <property type="evidence" value="ECO:0000266"/>
    <property type="project" value="MGI"/>
</dbReference>
<dbReference type="CDD" id="cd15225">
    <property type="entry name" value="7tmA_OR10A-like"/>
    <property type="match status" value="1"/>
</dbReference>
<dbReference type="FunFam" id="1.20.1070.10:FF:000110">
    <property type="entry name" value="olfactory receptor 10H1-like"/>
    <property type="match status" value="1"/>
</dbReference>
<dbReference type="Gene3D" id="1.20.1070.10">
    <property type="entry name" value="Rhodopsin 7-helix transmembrane proteins"/>
    <property type="match status" value="1"/>
</dbReference>
<dbReference type="InterPro" id="IPR000276">
    <property type="entry name" value="GPCR_Rhodpsn"/>
</dbReference>
<dbReference type="InterPro" id="IPR017452">
    <property type="entry name" value="GPCR_Rhodpsn_7TM"/>
</dbReference>
<dbReference type="InterPro" id="IPR000725">
    <property type="entry name" value="Olfact_rcpt"/>
</dbReference>
<dbReference type="PANTHER" id="PTHR26453">
    <property type="entry name" value="OLFACTORY RECEPTOR"/>
    <property type="match status" value="1"/>
</dbReference>
<dbReference type="Pfam" id="PF13853">
    <property type="entry name" value="7tm_4"/>
    <property type="match status" value="1"/>
</dbReference>
<dbReference type="PRINTS" id="PR00237">
    <property type="entry name" value="GPCRRHODOPSN"/>
</dbReference>
<dbReference type="PRINTS" id="PR00245">
    <property type="entry name" value="OLFACTORYR"/>
</dbReference>
<dbReference type="SUPFAM" id="SSF81321">
    <property type="entry name" value="Family A G protein-coupled receptor-like"/>
    <property type="match status" value="1"/>
</dbReference>
<dbReference type="PROSITE" id="PS50262">
    <property type="entry name" value="G_PROTEIN_RECEP_F1_2"/>
    <property type="match status" value="1"/>
</dbReference>
<accession>Q8VBW9</accession>
<protein>
    <recommendedName>
        <fullName evidence="3">Olfactory receptor 10H28</fullName>
    </recommendedName>
    <alternativeName>
        <fullName>Odorant receptor M4</fullName>
    </alternativeName>
    <alternativeName>
        <fullName>Olfactory receptor 267-1</fullName>
    </alternativeName>
    <alternativeName>
        <fullName>Olfactory receptor 63</fullName>
    </alternativeName>
</protein>
<name>10H28_MOUSE</name>
<organism>
    <name type="scientific">Mus musculus</name>
    <name type="common">Mouse</name>
    <dbReference type="NCBI Taxonomy" id="10090"/>
    <lineage>
        <taxon>Eukaryota</taxon>
        <taxon>Metazoa</taxon>
        <taxon>Chordata</taxon>
        <taxon>Craniata</taxon>
        <taxon>Vertebrata</taxon>
        <taxon>Euteleostomi</taxon>
        <taxon>Mammalia</taxon>
        <taxon>Eutheria</taxon>
        <taxon>Euarchontoglires</taxon>
        <taxon>Glires</taxon>
        <taxon>Rodentia</taxon>
        <taxon>Myomorpha</taxon>
        <taxon>Muroidea</taxon>
        <taxon>Muridae</taxon>
        <taxon>Murinae</taxon>
        <taxon>Mus</taxon>
        <taxon>Mus</taxon>
    </lineage>
</organism>
<sequence>MPGQNYSTISEFILFGFSAFPHQMLPALFLLYLLMYLFTLLGNLVIMAAIWTEHRLHTPMYLFLCALSISEILFTVVITPRMLSDMLSTHRSITFIACANQLFFSFTFGYTHSFLLVVMGYDRYVAICRPLHYHALMSLQGCARLVAWSWAGGSLIGMALTIIIFHLTFCESNVIHHILCHVFSLLKLACGERTAFVTIAVILVCVTPLIGCLVFIILSYIFIVAAILRIPSTEGRHKTFSTCASHLTVVIVHYGFASIIYLKSRGLYSQYTDTLMSTTYTVFTPFLSPIIFSLRNKELKNAIIKSFHRNVCQQSI</sequence>